<gene>
    <name type="primary">Ly6g</name>
</gene>
<evidence type="ECO:0000250" key="1"/>
<evidence type="ECO:0000255" key="2"/>
<evidence type="ECO:0000269" key="3">
    <source>
    </source>
</evidence>
<evidence type="ECO:0000312" key="4">
    <source>
        <dbReference type="Proteomes" id="UP000000589"/>
    </source>
</evidence>
<name>LY6G_MOUSE</name>
<protein>
    <recommendedName>
        <fullName>Lymphocyte antigen 6G</fullName>
        <shortName>Ly-6G</shortName>
    </recommendedName>
    <alternativeName>
        <fullName>Ly-6G.1</fullName>
    </alternativeName>
</protein>
<dbReference type="EMBL" id="AC116498">
    <property type="status" value="NOT_ANNOTATED_CDS"/>
    <property type="molecule type" value="Genomic_DNA"/>
</dbReference>
<dbReference type="EMBL" id="X70920">
    <property type="protein sequence ID" value="CAA50269.1"/>
    <property type="molecule type" value="Genomic_DNA"/>
</dbReference>
<dbReference type="EMBL" id="X70921">
    <property type="protein sequence ID" value="CAA50269.1"/>
    <property type="status" value="JOINED"/>
    <property type="molecule type" value="Genomic_DNA"/>
</dbReference>
<dbReference type="CCDS" id="CCDS79377.1"/>
<dbReference type="PIR" id="I48640">
    <property type="entry name" value="I48640"/>
</dbReference>
<dbReference type="RefSeq" id="NP_001297367.1">
    <property type="nucleotide sequence ID" value="NM_001310438.1"/>
</dbReference>
<dbReference type="RefSeq" id="NP_001361159.1">
    <property type="nucleotide sequence ID" value="NM_001374230.1"/>
</dbReference>
<dbReference type="RefSeq" id="XP_006521677.1">
    <property type="nucleotide sequence ID" value="XM_006521614.1"/>
</dbReference>
<dbReference type="FunCoup" id="P35461">
    <property type="interactions" value="181"/>
</dbReference>
<dbReference type="STRING" id="10090.ENSMUSP00000140173"/>
<dbReference type="iPTMnet" id="P35461"/>
<dbReference type="PhosphoSitePlus" id="P35461"/>
<dbReference type="PaxDb" id="10090-ENSMUSP00000140173"/>
<dbReference type="Ensembl" id="ENSMUST00000190262.2">
    <property type="protein sequence ID" value="ENSMUSP00000140173.2"/>
    <property type="gene ID" value="ENSMUSG00000022582.5"/>
</dbReference>
<dbReference type="GeneID" id="546644"/>
<dbReference type="KEGG" id="mmu:546644"/>
<dbReference type="AGR" id="MGI:109440"/>
<dbReference type="CTD" id="546644"/>
<dbReference type="MGI" id="MGI:109440">
    <property type="gene designation" value="Ly6g"/>
</dbReference>
<dbReference type="VEuPathDB" id="HostDB:ENSMUSG00000022582"/>
<dbReference type="eggNOG" id="ENOG502TD4F">
    <property type="taxonomic scope" value="Eukaryota"/>
</dbReference>
<dbReference type="GeneTree" id="ENSGT00940000154560"/>
<dbReference type="HOGENOM" id="CLU_106772_0_0_1"/>
<dbReference type="InParanoid" id="P35461"/>
<dbReference type="OMA" id="CHIAKSC"/>
<dbReference type="OrthoDB" id="9624109at2759"/>
<dbReference type="PhylomeDB" id="P35461"/>
<dbReference type="TreeFam" id="TF337757"/>
<dbReference type="BioGRID-ORCS" id="546644">
    <property type="hits" value="0 hits in 37 CRISPR screens"/>
</dbReference>
<dbReference type="PRO" id="PR:P35461"/>
<dbReference type="Proteomes" id="UP000000589">
    <property type="component" value="Chromosome 15"/>
</dbReference>
<dbReference type="RNAct" id="P35461">
    <property type="molecule type" value="protein"/>
</dbReference>
<dbReference type="Bgee" id="ENSMUSG00000022582">
    <property type="expression patterns" value="Expressed in granulocyte and 35 other cell types or tissues"/>
</dbReference>
<dbReference type="ExpressionAtlas" id="P35461">
    <property type="expression patterns" value="baseline and differential"/>
</dbReference>
<dbReference type="GO" id="GO:0009897">
    <property type="term" value="C:external side of plasma membrane"/>
    <property type="evidence" value="ECO:0000314"/>
    <property type="project" value="MGI"/>
</dbReference>
<dbReference type="CDD" id="cd23541">
    <property type="entry name" value="TFP_LU_ECD_Ly6A_like"/>
    <property type="match status" value="1"/>
</dbReference>
<dbReference type="FunFam" id="2.10.60.10:FF:000003">
    <property type="entry name" value="lymphocyte antigen 6E isoform X1"/>
    <property type="match status" value="1"/>
</dbReference>
<dbReference type="Gene3D" id="2.10.60.10">
    <property type="entry name" value="CD59"/>
    <property type="match status" value="1"/>
</dbReference>
<dbReference type="InterPro" id="IPR018363">
    <property type="entry name" value="CD59_antigen_CS"/>
</dbReference>
<dbReference type="InterPro" id="IPR016054">
    <property type="entry name" value="LY6_UPA_recep-like"/>
</dbReference>
<dbReference type="InterPro" id="IPR051445">
    <property type="entry name" value="LY6H/LY6L_nAChR_modulators"/>
</dbReference>
<dbReference type="InterPro" id="IPR045860">
    <property type="entry name" value="Snake_toxin-like_sf"/>
</dbReference>
<dbReference type="PANTHER" id="PTHR32217">
    <property type="entry name" value="LYMPHOCYTE ANTIGEN 6H"/>
    <property type="match status" value="1"/>
</dbReference>
<dbReference type="PANTHER" id="PTHR32217:SF3">
    <property type="entry name" value="LYMPHOCYTE ANTIGEN 6S"/>
    <property type="match status" value="1"/>
</dbReference>
<dbReference type="Pfam" id="PF00021">
    <property type="entry name" value="UPAR_LY6"/>
    <property type="match status" value="1"/>
</dbReference>
<dbReference type="SMART" id="SM00134">
    <property type="entry name" value="LU"/>
    <property type="match status" value="1"/>
</dbReference>
<dbReference type="SUPFAM" id="SSF57302">
    <property type="entry name" value="Snake toxin-like"/>
    <property type="match status" value="1"/>
</dbReference>
<dbReference type="PROSITE" id="PS00983">
    <property type="entry name" value="LY6_UPAR"/>
    <property type="match status" value="1"/>
</dbReference>
<accession>P35461</accession>
<accession>A0A087WQF5</accession>
<sequence length="134" mass="14324">MDTCHIAKSCVLILLVVLLCAERAQGLECYNCIGVPPETSCNTTTCPFSDGFCVALEIEVIVDSHRSKVKSNLCLPICPTTLDNTEITGNAVNVKTYCCKEDLCNAAVPTGGSSWTMAGVLLFSLVSVLLQTFL</sequence>
<keyword id="KW-1003">Cell membrane</keyword>
<keyword id="KW-1015">Disulfide bond</keyword>
<keyword id="KW-0325">Glycoprotein</keyword>
<keyword id="KW-0336">GPI-anchor</keyword>
<keyword id="KW-0449">Lipoprotein</keyword>
<keyword id="KW-0472">Membrane</keyword>
<keyword id="KW-1185">Reference proteome</keyword>
<keyword id="KW-0732">Signal</keyword>
<proteinExistence type="evidence at transcript level"/>
<organism>
    <name type="scientific">Mus musculus</name>
    <name type="common">Mouse</name>
    <dbReference type="NCBI Taxonomy" id="10090"/>
    <lineage>
        <taxon>Eukaryota</taxon>
        <taxon>Metazoa</taxon>
        <taxon>Chordata</taxon>
        <taxon>Craniata</taxon>
        <taxon>Vertebrata</taxon>
        <taxon>Euteleostomi</taxon>
        <taxon>Mammalia</taxon>
        <taxon>Eutheria</taxon>
        <taxon>Euarchontoglires</taxon>
        <taxon>Glires</taxon>
        <taxon>Rodentia</taxon>
        <taxon>Myomorpha</taxon>
        <taxon>Muroidea</taxon>
        <taxon>Muridae</taxon>
        <taxon>Murinae</taxon>
        <taxon>Mus</taxon>
        <taxon>Mus</taxon>
    </lineage>
</organism>
<feature type="signal peptide" evidence="2">
    <location>
        <begin position="1"/>
        <end position="26"/>
    </location>
</feature>
<feature type="chain" id="PRO_0000036146" description="Lymphocyte antigen 6G">
    <location>
        <begin position="27"/>
        <end position="105"/>
    </location>
</feature>
<feature type="propeptide" id="PRO_0000036147" description="Removed in mature form" evidence="2">
    <location>
        <begin position="106"/>
        <end position="134"/>
    </location>
</feature>
<feature type="domain" description="UPAR/Ly6" evidence="2">
    <location>
        <begin position="27"/>
        <end position="118"/>
    </location>
</feature>
<feature type="lipid moiety-binding region" description="GPI-anchor amidated asparagine" evidence="2">
    <location>
        <position position="105"/>
    </location>
</feature>
<feature type="disulfide bond" evidence="1">
    <location>
        <begin position="29"/>
        <end position="53"/>
    </location>
</feature>
<feature type="disulfide bond" evidence="1">
    <location>
        <begin position="32"/>
        <end position="41"/>
    </location>
</feature>
<feature type="disulfide bond" evidence="1">
    <location>
        <begin position="46"/>
        <end position="74"/>
    </location>
</feature>
<feature type="disulfide bond" evidence="1">
    <location>
        <begin position="78"/>
        <end position="98"/>
    </location>
</feature>
<feature type="disulfide bond" evidence="1">
    <location>
        <begin position="99"/>
        <end position="104"/>
    </location>
</feature>
<comment type="subcellular location">
    <subcellularLocation>
        <location evidence="2">Cell membrane</location>
        <topology evidence="2">Lipid-anchor</topology>
        <topology evidence="2">GPI-anchor</topology>
    </subcellularLocation>
</comment>
<comment type="tissue specificity">
    <text evidence="3">Expressed in bone marrow.</text>
</comment>
<reference evidence="4" key="1">
    <citation type="journal article" date="2009" name="PLoS Biol.">
        <title>Lineage-specific biology revealed by a finished genome assembly of the mouse.</title>
        <authorList>
            <person name="Church D.M."/>
            <person name="Goodstadt L."/>
            <person name="Hillier L.W."/>
            <person name="Zody M.C."/>
            <person name="Goldstein S."/>
            <person name="She X."/>
            <person name="Bult C.J."/>
            <person name="Agarwala R."/>
            <person name="Cherry J.L."/>
            <person name="DiCuccio M."/>
            <person name="Hlavina W."/>
            <person name="Kapustin Y."/>
            <person name="Meric P."/>
            <person name="Maglott D."/>
            <person name="Birtle Z."/>
            <person name="Marques A.C."/>
            <person name="Graves T."/>
            <person name="Zhou S."/>
            <person name="Teague B."/>
            <person name="Potamousis K."/>
            <person name="Churas C."/>
            <person name="Place M."/>
            <person name="Herschleb J."/>
            <person name="Runnheim R."/>
            <person name="Forrest D."/>
            <person name="Amos-Landgraf J."/>
            <person name="Schwartz D.C."/>
            <person name="Cheng Z."/>
            <person name="Lindblad-Toh K."/>
            <person name="Eichler E.E."/>
            <person name="Ponting C.P."/>
        </authorList>
    </citation>
    <scope>NUCLEOTIDE SEQUENCE [LARGE SCALE GENOMIC DNA]</scope>
    <source>
        <strain evidence="4">C57BL/6J</strain>
    </source>
</reference>
<reference key="2">
    <citation type="journal article" date="1993" name="J. Immunol.">
        <title>Characterization of two novel Ly-6 genes. Protein sequence and potential structural similarity to alpha-bungarotoxin and other neurotoxins.</title>
        <authorList>
            <person name="Fleming T.J."/>
            <person name="O'Huigin C."/>
            <person name="Malek T.R."/>
        </authorList>
    </citation>
    <scope>NUCLEOTIDE SEQUENCE [GENOMIC DNA] OF 24-134</scope>
    <scope>TISSUE SPECIFICITY</scope>
    <source>
        <strain>BALB/cJ</strain>
        <tissue>Liver</tissue>
    </source>
</reference>